<dbReference type="EMBL" id="AC106862">
    <property type="status" value="NOT_ANNOTATED_CDS"/>
    <property type="molecule type" value="mRNA"/>
</dbReference>
<dbReference type="EMBL" id="BC043153">
    <property type="status" value="NOT_ANNOTATED_CDS"/>
    <property type="molecule type" value="mRNA"/>
</dbReference>
<dbReference type="EMBL" id="BC101323">
    <property type="protein sequence ID" value="AAI01324.1"/>
    <property type="molecule type" value="mRNA"/>
</dbReference>
<dbReference type="EMBL" id="BC101324">
    <property type="protein sequence ID" value="AAI01325.1"/>
    <property type="molecule type" value="mRNA"/>
</dbReference>
<dbReference type="CCDS" id="CCDS64790.1"/>
<dbReference type="RefSeq" id="NP_848656.2">
    <property type="nucleotide sequence ID" value="NM_178561.4"/>
</dbReference>
<dbReference type="SMR" id="Q86UF2"/>
<dbReference type="BioGRID" id="131033">
    <property type="interactions" value="7"/>
</dbReference>
<dbReference type="FunCoup" id="Q86UF2">
    <property type="interactions" value="6"/>
</dbReference>
<dbReference type="IntAct" id="Q86UF2">
    <property type="interactions" value="3"/>
</dbReference>
<dbReference type="STRING" id="9606.ENSP00000474388"/>
<dbReference type="iPTMnet" id="Q86UF2"/>
<dbReference type="PhosphoSitePlus" id="Q86UF2"/>
<dbReference type="BioMuta" id="CTAGE6"/>
<dbReference type="DMDM" id="259016213"/>
<dbReference type="jPOST" id="Q86UF2"/>
<dbReference type="MassIVE" id="Q86UF2"/>
<dbReference type="PaxDb" id="9606-ENSP00000474388"/>
<dbReference type="PeptideAtlas" id="Q86UF2"/>
<dbReference type="ProteomicsDB" id="69815"/>
<dbReference type="Antibodypedia" id="70774">
    <property type="antibodies" value="50 antibodies from 11 providers"/>
</dbReference>
<dbReference type="DNASU" id="340307"/>
<dbReference type="Ensembl" id="ENST00000470691.2">
    <property type="protein sequence ID" value="ENSP00000474388.1"/>
    <property type="gene ID" value="ENSG00000271321.1"/>
</dbReference>
<dbReference type="Ensembl" id="ENST00000643756.1">
    <property type="protein sequence ID" value="ENSP00000493497.1"/>
    <property type="gene ID" value="ENSG00000285123.1"/>
</dbReference>
<dbReference type="GeneID" id="340307"/>
<dbReference type="KEGG" id="hsa:340307"/>
<dbReference type="MANE-Select" id="ENST00000470691.2">
    <property type="protein sequence ID" value="ENSP00000474388.1"/>
    <property type="RefSeq nucleotide sequence ID" value="NM_178561.5"/>
    <property type="RefSeq protein sequence ID" value="NP_848656.2"/>
</dbReference>
<dbReference type="UCSC" id="uc003wdk.5">
    <property type="organism name" value="human"/>
</dbReference>
<dbReference type="AGR" id="HGNC:28644"/>
<dbReference type="CTD" id="340307"/>
<dbReference type="GeneCards" id="CTAGE6"/>
<dbReference type="HGNC" id="HGNC:28644">
    <property type="gene designation" value="CTAGE6"/>
</dbReference>
<dbReference type="HPA" id="ENSG00000271321">
    <property type="expression patterns" value="Tissue enriched (testis)"/>
</dbReference>
<dbReference type="neXtProt" id="NX_Q86UF2"/>
<dbReference type="PharmGKB" id="PA165617921"/>
<dbReference type="VEuPathDB" id="HostDB:ENSG00000271321"/>
<dbReference type="eggNOG" id="ENOG502QUND">
    <property type="taxonomic scope" value="Eukaryota"/>
</dbReference>
<dbReference type="GeneTree" id="ENSGT00950000182767"/>
<dbReference type="HOGENOM" id="CLU_002106_2_0_1"/>
<dbReference type="InParanoid" id="Q86UF2"/>
<dbReference type="OMA" id="HRMIFPP"/>
<dbReference type="OrthoDB" id="3548878at2759"/>
<dbReference type="PAN-GO" id="Q86UF2">
    <property type="GO annotations" value="5 GO annotations based on evolutionary models"/>
</dbReference>
<dbReference type="PhylomeDB" id="Q86UF2"/>
<dbReference type="PathwayCommons" id="Q86UF2"/>
<dbReference type="SignaLink" id="Q86UF2"/>
<dbReference type="BioGRID-ORCS" id="340307">
    <property type="hits" value="16 hits in 285 CRISPR screens"/>
</dbReference>
<dbReference type="GenomeRNAi" id="340307"/>
<dbReference type="Pharos" id="Q86UF2">
    <property type="development level" value="Tdark"/>
</dbReference>
<dbReference type="PRO" id="PR:Q86UF2"/>
<dbReference type="Proteomes" id="UP000005640">
    <property type="component" value="Chromosome 7"/>
</dbReference>
<dbReference type="RNAct" id="Q86UF2">
    <property type="molecule type" value="protein"/>
</dbReference>
<dbReference type="Bgee" id="ENSG00000271321">
    <property type="expression patterns" value="Expressed in right testis and 44 other cell types or tissues"/>
</dbReference>
<dbReference type="GO" id="GO:0070971">
    <property type="term" value="C:endoplasmic reticulum exit site"/>
    <property type="evidence" value="ECO:0000318"/>
    <property type="project" value="GO_Central"/>
</dbReference>
<dbReference type="GO" id="GO:0005789">
    <property type="term" value="C:endoplasmic reticulum membrane"/>
    <property type="evidence" value="ECO:0000318"/>
    <property type="project" value="GO_Central"/>
</dbReference>
<dbReference type="GO" id="GO:0006888">
    <property type="term" value="P:endoplasmic reticulum to Golgi vesicle-mediated transport"/>
    <property type="evidence" value="ECO:0000318"/>
    <property type="project" value="GO_Central"/>
</dbReference>
<dbReference type="GO" id="GO:0009306">
    <property type="term" value="P:protein secretion"/>
    <property type="evidence" value="ECO:0000318"/>
    <property type="project" value="GO_Central"/>
</dbReference>
<dbReference type="GO" id="GO:0035459">
    <property type="term" value="P:vesicle cargo loading"/>
    <property type="evidence" value="ECO:0000318"/>
    <property type="project" value="GO_Central"/>
</dbReference>
<dbReference type="FunFam" id="1.20.5.340:FF:000044">
    <property type="entry name" value="MIA SH3 domain ER export factor 2"/>
    <property type="match status" value="1"/>
</dbReference>
<dbReference type="Gene3D" id="1.20.5.340">
    <property type="match status" value="1"/>
</dbReference>
<dbReference type="InterPro" id="IPR051500">
    <property type="entry name" value="cTAGE_MIA/OTOR"/>
</dbReference>
<dbReference type="PANTHER" id="PTHR23158:SF57">
    <property type="entry name" value="CTAGE FAMILY MEMBER 15-RELATED"/>
    <property type="match status" value="1"/>
</dbReference>
<dbReference type="PANTHER" id="PTHR23158">
    <property type="entry name" value="MELANOMA INHIBITORY ACTIVITY-RELATED"/>
    <property type="match status" value="1"/>
</dbReference>
<accession>Q86UF2</accession>
<accession>A4FU29</accession>
<accession>Q3ZCM5</accession>
<proteinExistence type="evidence at transcript level"/>
<keyword id="KW-0175">Coiled coil</keyword>
<keyword id="KW-0472">Membrane</keyword>
<keyword id="KW-1185">Reference proteome</keyword>
<keyword id="KW-0812">Transmembrane</keyword>
<keyword id="KW-1133">Transmembrane helix</keyword>
<organism>
    <name type="scientific">Homo sapiens</name>
    <name type="common">Human</name>
    <dbReference type="NCBI Taxonomy" id="9606"/>
    <lineage>
        <taxon>Eukaryota</taxon>
        <taxon>Metazoa</taxon>
        <taxon>Chordata</taxon>
        <taxon>Craniata</taxon>
        <taxon>Vertebrata</taxon>
        <taxon>Euteleostomi</taxon>
        <taxon>Mammalia</taxon>
        <taxon>Eutheria</taxon>
        <taxon>Euarchontoglires</taxon>
        <taxon>Primates</taxon>
        <taxon>Haplorrhini</taxon>
        <taxon>Catarrhini</taxon>
        <taxon>Hominidae</taxon>
        <taxon>Homo</taxon>
    </lineage>
</organism>
<gene>
    <name type="primary">CTAGE6</name>
    <name type="synonym">CTAGE6P</name>
</gene>
<sequence>MEEPGATPQPYLGLVLEELRRVVAALPESMRPDENPYGFPSELVVCAAVIGFFVVLLFLWRSFRSVRSRLYVGREQKLGATLSGLIEEKCKLLEKFSLIQKEYEGYEVESSLEDASFEKAAAEEARSLEATCEKLNRSNSELEDEILCLEKDLKEEKSKHSQQDELMADISKSIQSLEDESKSLKSQIAEAKIICKTFKMSEERRAIAIKDALNENSQLQTSHKQLFQQEAEVWKGEVSELNKQKITFEDSKVHAEQVLNDKENHIKTLTGHLPMMKDQAAVLEEDTTDDDNLELEVNSQWENGANLDDPLKGALKKLIHAAKLNVSLKSLEGERNHIIIQLSEVDKTKEELTEHIKNLQTQQESLQSENIYFESENQKLQQKLKIMTEFYQEDEMKLYRKLTVEENYRIEEEEKLSKVEEKLSRATEQLETYRKLAKDLEEELERTVHFYQKQVISYEKRGHDNWLAARTAERNLSDLRKENAHNKQKLTETELKFELLEKDPNALDVSNTAFGREHAPNGPAPLGQRSSETRAFLSPQTLLEDPLGLSPVLPEGGGRGPRGPGNPLDHQITNERGEPSCDRLTDPHRAPSDTGSLSSPVEQDCKMMFPPPGQSYPDSALPPQREDRFYSNSERLSGSAEPRSFKMTSLDKMDGSMPSEMESSRNDAKDDLGNLNVPDSSLPAENEATGPGFIPPPLAPVRGPLFPVDTRGPFMRRGPPFPPPPPGTMFGASRGYFPPRDFPGPPHAPFAMRNIYPPRGLPPYFHPRPGFYPNPAF</sequence>
<evidence type="ECO:0000255" key="1"/>
<evidence type="ECO:0000256" key="2">
    <source>
        <dbReference type="SAM" id="MobiDB-lite"/>
    </source>
</evidence>
<evidence type="ECO:0000305" key="3"/>
<reference key="1">
    <citation type="journal article" date="2003" name="Nature">
        <title>The DNA sequence of human chromosome 7.</title>
        <authorList>
            <person name="Hillier L.W."/>
            <person name="Fulton R.S."/>
            <person name="Fulton L.A."/>
            <person name="Graves T.A."/>
            <person name="Pepin K.H."/>
            <person name="Wagner-McPherson C."/>
            <person name="Layman D."/>
            <person name="Maas J."/>
            <person name="Jaeger S."/>
            <person name="Walker R."/>
            <person name="Wylie K."/>
            <person name="Sekhon M."/>
            <person name="Becker M.C."/>
            <person name="O'Laughlin M.D."/>
            <person name="Schaller M.E."/>
            <person name="Fewell G.A."/>
            <person name="Delehaunty K.D."/>
            <person name="Miner T.L."/>
            <person name="Nash W.E."/>
            <person name="Cordes M."/>
            <person name="Du H."/>
            <person name="Sun H."/>
            <person name="Edwards J."/>
            <person name="Bradshaw-Cordum H."/>
            <person name="Ali J."/>
            <person name="Andrews S."/>
            <person name="Isak A."/>
            <person name="Vanbrunt A."/>
            <person name="Nguyen C."/>
            <person name="Du F."/>
            <person name="Lamar B."/>
            <person name="Courtney L."/>
            <person name="Kalicki J."/>
            <person name="Ozersky P."/>
            <person name="Bielicki L."/>
            <person name="Scott K."/>
            <person name="Holmes A."/>
            <person name="Harkins R."/>
            <person name="Harris A."/>
            <person name="Strong C.M."/>
            <person name="Hou S."/>
            <person name="Tomlinson C."/>
            <person name="Dauphin-Kohlberg S."/>
            <person name="Kozlowicz-Reilly A."/>
            <person name="Leonard S."/>
            <person name="Rohlfing T."/>
            <person name="Rock S.M."/>
            <person name="Tin-Wollam A.-M."/>
            <person name="Abbott A."/>
            <person name="Minx P."/>
            <person name="Maupin R."/>
            <person name="Strowmatt C."/>
            <person name="Latreille P."/>
            <person name="Miller N."/>
            <person name="Johnson D."/>
            <person name="Murray J."/>
            <person name="Woessner J.P."/>
            <person name="Wendl M.C."/>
            <person name="Yang S.-P."/>
            <person name="Schultz B.R."/>
            <person name="Wallis J.W."/>
            <person name="Spieth J."/>
            <person name="Bieri T.A."/>
            <person name="Nelson J.O."/>
            <person name="Berkowicz N."/>
            <person name="Wohldmann P.E."/>
            <person name="Cook L.L."/>
            <person name="Hickenbotham M.T."/>
            <person name="Eldred J."/>
            <person name="Williams D."/>
            <person name="Bedell J.A."/>
            <person name="Mardis E.R."/>
            <person name="Clifton S.W."/>
            <person name="Chissoe S.L."/>
            <person name="Marra M.A."/>
            <person name="Raymond C."/>
            <person name="Haugen E."/>
            <person name="Gillett W."/>
            <person name="Zhou Y."/>
            <person name="James R."/>
            <person name="Phelps K."/>
            <person name="Iadanoto S."/>
            <person name="Bubb K."/>
            <person name="Simms E."/>
            <person name="Levy R."/>
            <person name="Clendenning J."/>
            <person name="Kaul R."/>
            <person name="Kent W.J."/>
            <person name="Furey T.S."/>
            <person name="Baertsch R.A."/>
            <person name="Brent M.R."/>
            <person name="Keibler E."/>
            <person name="Flicek P."/>
            <person name="Bork P."/>
            <person name="Suyama M."/>
            <person name="Bailey J.A."/>
            <person name="Portnoy M.E."/>
            <person name="Torrents D."/>
            <person name="Chinwalla A.T."/>
            <person name="Gish W.R."/>
            <person name="Eddy S.R."/>
            <person name="McPherson J.D."/>
            <person name="Olson M.V."/>
            <person name="Eichler E.E."/>
            <person name="Green E.D."/>
            <person name="Waterston R.H."/>
            <person name="Wilson R.K."/>
        </authorList>
    </citation>
    <scope>NUCLEOTIDE SEQUENCE [LARGE SCALE GENOMIC DNA]</scope>
</reference>
<reference key="2">
    <citation type="journal article" date="2004" name="Genome Res.">
        <title>The status, quality, and expansion of the NIH full-length cDNA project: the Mammalian Gene Collection (MGC).</title>
        <authorList>
            <consortium name="The MGC Project Team"/>
        </authorList>
    </citation>
    <scope>NUCLEOTIDE SEQUENCE [LARGE SCALE MRNA]</scope>
    <source>
        <tissue>Testis</tissue>
    </source>
</reference>
<name>CTGE6_HUMAN</name>
<feature type="chain" id="PRO_0000384149" description="cTAGE family member 6">
    <location>
        <begin position="1"/>
        <end position="777"/>
    </location>
</feature>
<feature type="transmembrane region" description="Helical" evidence="1">
    <location>
        <begin position="39"/>
        <end position="59"/>
    </location>
</feature>
<feature type="region of interest" description="Disordered" evidence="2">
    <location>
        <begin position="541"/>
        <end position="671"/>
    </location>
</feature>
<feature type="region of interest" description="Disordered" evidence="2">
    <location>
        <begin position="721"/>
        <end position="742"/>
    </location>
</feature>
<feature type="coiled-coil region" evidence="1">
    <location>
        <begin position="118"/>
        <end position="269"/>
    </location>
</feature>
<feature type="coiled-coil region" evidence="1">
    <location>
        <begin position="339"/>
        <end position="498"/>
    </location>
</feature>
<feature type="compositionally biased region" description="Basic and acidic residues" evidence="2">
    <location>
        <begin position="572"/>
        <end position="591"/>
    </location>
</feature>
<feature type="compositionally biased region" description="Basic and acidic residues" evidence="2">
    <location>
        <begin position="662"/>
        <end position="671"/>
    </location>
</feature>
<feature type="sequence conflict" description="In Ref. 2; AAI01324/AAI01325." evidence="3" ref="2">
    <original>E</original>
    <variation>Q</variation>
    <location>
        <position position="237"/>
    </location>
</feature>
<feature type="sequence conflict" description="In Ref. 2; AAI01324." evidence="3" ref="2">
    <original>E</original>
    <variation>K</variation>
    <location>
        <position position="296"/>
    </location>
</feature>
<feature type="sequence conflict" description="In Ref. 2; AAI01324." evidence="3" ref="2">
    <original>L</original>
    <variation>P</variation>
    <location>
        <position position="311"/>
    </location>
</feature>
<feature type="sequence conflict" description="In Ref. 2; AAI01325." evidence="3" ref="2">
    <original>T</original>
    <variation>S</variation>
    <location>
        <position position="348"/>
    </location>
</feature>
<feature type="sequence conflict" description="In Ref. 2; AAI01325." evidence="3" ref="2">
    <original>E</original>
    <variation>A</variation>
    <location>
        <position position="364"/>
    </location>
</feature>
<feature type="sequence conflict" description="In Ref. 2; BC043153." evidence="3" ref="2">
    <original>E</original>
    <variation>G</variation>
    <location>
        <position position="412"/>
    </location>
</feature>
<protein>
    <recommendedName>
        <fullName>cTAGE family member 6</fullName>
        <shortName>Protein cTAGE-6</shortName>
    </recommendedName>
</protein>
<comment type="subcellular location">
    <subcellularLocation>
        <location evidence="3">Membrane</location>
        <topology evidence="3">Single-pass membrane protein</topology>
    </subcellularLocation>
</comment>
<comment type="similarity">
    <text evidence="3">Belongs to the cTAGE family.</text>
</comment>
<comment type="sequence caution" evidence="3">
    <conflict type="frameshift">
        <sequence resource="EMBL" id="BC043153"/>
    </conflict>
</comment>